<protein>
    <recommendedName>
        <fullName>Metastasis-associated protein MTA2</fullName>
    </recommendedName>
    <alternativeName>
        <fullName>Metastasis-associated 1-like 1</fullName>
    </alternativeName>
</protein>
<gene>
    <name type="primary">Mta2</name>
    <name type="synonym">Mta1l1</name>
</gene>
<proteinExistence type="evidence at protein level"/>
<dbReference type="EMBL" id="AF159259">
    <property type="protein sequence ID" value="AAD51281.1"/>
    <property type="molecule type" value="mRNA"/>
</dbReference>
<dbReference type="EMBL" id="AF348083">
    <property type="protein sequence ID" value="AAL30174.1"/>
    <property type="molecule type" value="Genomic_DNA"/>
</dbReference>
<dbReference type="EMBL" id="AB047977">
    <property type="protein sequence ID" value="BAB79231.1"/>
    <property type="molecule type" value="Genomic_DNA"/>
</dbReference>
<dbReference type="EMBL" id="AK088158">
    <property type="protein sequence ID" value="BAC40180.1"/>
    <property type="molecule type" value="mRNA"/>
</dbReference>
<dbReference type="EMBL" id="AK147099">
    <property type="protein sequence ID" value="BAE27675.1"/>
    <property type="molecule type" value="mRNA"/>
</dbReference>
<dbReference type="EMBL" id="AK159979">
    <property type="protein sequence ID" value="BAE35530.1"/>
    <property type="molecule type" value="mRNA"/>
</dbReference>
<dbReference type="EMBL" id="BC079847">
    <property type="protein sequence ID" value="AAH79847.1"/>
    <property type="molecule type" value="mRNA"/>
</dbReference>
<dbReference type="CCDS" id="CCDS29561.1"/>
<dbReference type="RefSeq" id="NP_035972.3">
    <property type="nucleotide sequence ID" value="NM_011842.3"/>
</dbReference>
<dbReference type="EMDB" id="EMD-21382"/>
<dbReference type="SMR" id="Q9R190"/>
<dbReference type="BioGRID" id="204807">
    <property type="interactions" value="57"/>
</dbReference>
<dbReference type="ComplexPortal" id="CPX-953">
    <property type="entry name" value="MBD2/NuRD nucleosome remodeling and deacetylase complex"/>
</dbReference>
<dbReference type="ComplexPortal" id="CPX-954">
    <property type="entry name" value="MBD3/NuRD nucleosome remodeling and deacetylase complex"/>
</dbReference>
<dbReference type="CORUM" id="Q9R190"/>
<dbReference type="DIP" id="DIP-36630N"/>
<dbReference type="FunCoup" id="Q9R190">
    <property type="interactions" value="4036"/>
</dbReference>
<dbReference type="IntAct" id="Q9R190">
    <property type="interactions" value="47"/>
</dbReference>
<dbReference type="MINT" id="Q9R190"/>
<dbReference type="STRING" id="10090.ENSMUSP00000093959"/>
<dbReference type="GlyGen" id="Q9R190">
    <property type="glycosylation" value="1 site, 1 O-linked glycan (1 site)"/>
</dbReference>
<dbReference type="iPTMnet" id="Q9R190"/>
<dbReference type="MetOSite" id="Q9R190"/>
<dbReference type="PhosphoSitePlus" id="Q9R190"/>
<dbReference type="SwissPalm" id="Q9R190"/>
<dbReference type="REPRODUCTION-2DPAGE" id="IPI00128230"/>
<dbReference type="jPOST" id="Q9R190"/>
<dbReference type="PaxDb" id="10090-ENSMUSP00000093959"/>
<dbReference type="PeptideAtlas" id="Q9R190"/>
<dbReference type="ProteomicsDB" id="290211"/>
<dbReference type="Pumba" id="Q9R190"/>
<dbReference type="Antibodypedia" id="1799">
    <property type="antibodies" value="422 antibodies from 40 providers"/>
</dbReference>
<dbReference type="DNASU" id="23942"/>
<dbReference type="Ensembl" id="ENSMUST00000096240.3">
    <property type="protein sequence ID" value="ENSMUSP00000093959.3"/>
    <property type="gene ID" value="ENSMUSG00000071646.10"/>
</dbReference>
<dbReference type="GeneID" id="23942"/>
<dbReference type="KEGG" id="mmu:23942"/>
<dbReference type="UCSC" id="uc008gof.1">
    <property type="organism name" value="mouse"/>
</dbReference>
<dbReference type="AGR" id="MGI:1346340"/>
<dbReference type="CTD" id="9219"/>
<dbReference type="MGI" id="MGI:1346340">
    <property type="gene designation" value="Mta2"/>
</dbReference>
<dbReference type="VEuPathDB" id="HostDB:ENSMUSG00000071646"/>
<dbReference type="eggNOG" id="KOG3554">
    <property type="taxonomic scope" value="Eukaryota"/>
</dbReference>
<dbReference type="GeneTree" id="ENSGT01030000234573"/>
<dbReference type="HOGENOM" id="CLU_006585_2_0_1"/>
<dbReference type="InParanoid" id="Q9R190"/>
<dbReference type="OMA" id="IRVGCKF"/>
<dbReference type="OrthoDB" id="2193595at2759"/>
<dbReference type="PhylomeDB" id="Q9R190"/>
<dbReference type="TreeFam" id="TF106444"/>
<dbReference type="Reactome" id="R-MMU-3214815">
    <property type="pathway name" value="HDACs deacetylate histones"/>
</dbReference>
<dbReference type="Reactome" id="R-MMU-6804758">
    <property type="pathway name" value="Regulation of TP53 Activity through Acetylation"/>
</dbReference>
<dbReference type="Reactome" id="R-MMU-73762">
    <property type="pathway name" value="RNA Polymerase I Transcription Initiation"/>
</dbReference>
<dbReference type="Reactome" id="R-MMU-8943724">
    <property type="pathway name" value="Regulation of PTEN gene transcription"/>
</dbReference>
<dbReference type="BioGRID-ORCS" id="23942">
    <property type="hits" value="12 hits in 85 CRISPR screens"/>
</dbReference>
<dbReference type="ChiTaRS" id="Mta2">
    <property type="organism name" value="mouse"/>
</dbReference>
<dbReference type="PRO" id="PR:Q9R190"/>
<dbReference type="Proteomes" id="UP000000589">
    <property type="component" value="Chromosome 19"/>
</dbReference>
<dbReference type="RNAct" id="Q9R190">
    <property type="molecule type" value="protein"/>
</dbReference>
<dbReference type="Bgee" id="ENSMUSG00000071646">
    <property type="expression patterns" value="Expressed in retinal neural layer and 228 other cell types or tissues"/>
</dbReference>
<dbReference type="GO" id="GO:0000781">
    <property type="term" value="C:chromosome, telomeric region"/>
    <property type="evidence" value="ECO:0007669"/>
    <property type="project" value="Ensembl"/>
</dbReference>
<dbReference type="GO" id="GO:0000118">
    <property type="term" value="C:histone deacetylase complex"/>
    <property type="evidence" value="ECO:0000314"/>
    <property type="project" value="MGI"/>
</dbReference>
<dbReference type="GO" id="GO:0005654">
    <property type="term" value="C:nucleoplasm"/>
    <property type="evidence" value="ECO:0000304"/>
    <property type="project" value="Reactome"/>
</dbReference>
<dbReference type="GO" id="GO:0005634">
    <property type="term" value="C:nucleus"/>
    <property type="evidence" value="ECO:0000314"/>
    <property type="project" value="MGI"/>
</dbReference>
<dbReference type="GO" id="GO:0016581">
    <property type="term" value="C:NuRD complex"/>
    <property type="evidence" value="ECO:0000314"/>
    <property type="project" value="MGI"/>
</dbReference>
<dbReference type="GO" id="GO:0003682">
    <property type="term" value="F:chromatin binding"/>
    <property type="evidence" value="ECO:0007669"/>
    <property type="project" value="InterPro"/>
</dbReference>
<dbReference type="GO" id="GO:0004407">
    <property type="term" value="F:histone deacetylase activity"/>
    <property type="evidence" value="ECO:0000314"/>
    <property type="project" value="MGI"/>
</dbReference>
<dbReference type="GO" id="GO:0042826">
    <property type="term" value="F:histone deacetylase binding"/>
    <property type="evidence" value="ECO:0007669"/>
    <property type="project" value="Ensembl"/>
</dbReference>
<dbReference type="GO" id="GO:0061629">
    <property type="term" value="F:RNA polymerase II-specific DNA-binding transcription factor binding"/>
    <property type="evidence" value="ECO:0007669"/>
    <property type="project" value="Ensembl"/>
</dbReference>
<dbReference type="GO" id="GO:0043565">
    <property type="term" value="F:sequence-specific DNA binding"/>
    <property type="evidence" value="ECO:0007669"/>
    <property type="project" value="InterPro"/>
</dbReference>
<dbReference type="GO" id="GO:0003712">
    <property type="term" value="F:transcription coregulator activity"/>
    <property type="evidence" value="ECO:0000314"/>
    <property type="project" value="UniProtKB"/>
</dbReference>
<dbReference type="GO" id="GO:0008270">
    <property type="term" value="F:zinc ion binding"/>
    <property type="evidence" value="ECO:0007669"/>
    <property type="project" value="UniProtKB-KW"/>
</dbReference>
<dbReference type="GO" id="GO:0006338">
    <property type="term" value="P:chromatin remodeling"/>
    <property type="evidence" value="ECO:0000266"/>
    <property type="project" value="ComplexPortal"/>
</dbReference>
<dbReference type="GO" id="GO:0051276">
    <property type="term" value="P:chromosome organization"/>
    <property type="evidence" value="ECO:0000304"/>
    <property type="project" value="MGI"/>
</dbReference>
<dbReference type="GO" id="GO:0071514">
    <property type="term" value="P:genomic imprinting"/>
    <property type="evidence" value="ECO:0000315"/>
    <property type="project" value="MGI"/>
</dbReference>
<dbReference type="GO" id="GO:0045892">
    <property type="term" value="P:negative regulation of DNA-templated transcription"/>
    <property type="evidence" value="ECO:0000314"/>
    <property type="project" value="UniProtKB"/>
</dbReference>
<dbReference type="GO" id="GO:0000122">
    <property type="term" value="P:negative regulation of transcription by RNA polymerase II"/>
    <property type="evidence" value="ECO:0000314"/>
    <property type="project" value="MGI"/>
</dbReference>
<dbReference type="GO" id="GO:0045893">
    <property type="term" value="P:positive regulation of DNA-templated transcription"/>
    <property type="evidence" value="ECO:0000303"/>
    <property type="project" value="ComplexPortal"/>
</dbReference>
<dbReference type="GO" id="GO:0045944">
    <property type="term" value="P:positive regulation of transcription by RNA polymerase II"/>
    <property type="evidence" value="ECO:0000314"/>
    <property type="project" value="MGI"/>
</dbReference>
<dbReference type="GO" id="GO:0042659">
    <property type="term" value="P:regulation of cell fate specification"/>
    <property type="evidence" value="ECO:0000303"/>
    <property type="project" value="ComplexPortal"/>
</dbReference>
<dbReference type="GO" id="GO:0010762">
    <property type="term" value="P:regulation of fibroblast migration"/>
    <property type="evidence" value="ECO:0007669"/>
    <property type="project" value="Ensembl"/>
</dbReference>
<dbReference type="GO" id="GO:2000736">
    <property type="term" value="P:regulation of stem cell differentiation"/>
    <property type="evidence" value="ECO:0000303"/>
    <property type="project" value="ComplexPortal"/>
</dbReference>
<dbReference type="CDD" id="cd04709">
    <property type="entry name" value="BAH_MTA"/>
    <property type="match status" value="1"/>
</dbReference>
<dbReference type="CDD" id="cd11661">
    <property type="entry name" value="SANT_MTA3_like"/>
    <property type="match status" value="1"/>
</dbReference>
<dbReference type="CDD" id="cd00202">
    <property type="entry name" value="ZnF_GATA"/>
    <property type="match status" value="1"/>
</dbReference>
<dbReference type="FunFam" id="1.10.10.60:FF:000012">
    <property type="entry name" value="Metastasis-associated 1 family, member 3"/>
    <property type="match status" value="1"/>
</dbReference>
<dbReference type="FunFam" id="2.30.30.490:FF:000001">
    <property type="entry name" value="Metastasis-associated 1 family, member 3"/>
    <property type="match status" value="1"/>
</dbReference>
<dbReference type="FunFam" id="4.10.1240.50:FF:000001">
    <property type="entry name" value="Metastasis-associated 1 family, member 3"/>
    <property type="match status" value="1"/>
</dbReference>
<dbReference type="Gene3D" id="2.30.30.490">
    <property type="match status" value="1"/>
</dbReference>
<dbReference type="Gene3D" id="4.10.1240.50">
    <property type="match status" value="1"/>
</dbReference>
<dbReference type="Gene3D" id="1.10.10.60">
    <property type="entry name" value="Homeodomain-like"/>
    <property type="match status" value="1"/>
</dbReference>
<dbReference type="InterPro" id="IPR001025">
    <property type="entry name" value="BAH_dom"/>
</dbReference>
<dbReference type="InterPro" id="IPR043151">
    <property type="entry name" value="BAH_sf"/>
</dbReference>
<dbReference type="InterPro" id="IPR000949">
    <property type="entry name" value="ELM2_dom"/>
</dbReference>
<dbReference type="InterPro" id="IPR009057">
    <property type="entry name" value="Homeodomain-like_sf"/>
</dbReference>
<dbReference type="InterPro" id="IPR040138">
    <property type="entry name" value="MIER/MTA"/>
</dbReference>
<dbReference type="InterPro" id="IPR035170">
    <property type="entry name" value="MTA1_R1"/>
</dbReference>
<dbReference type="InterPro" id="IPR001005">
    <property type="entry name" value="SANT/Myb"/>
</dbReference>
<dbReference type="InterPro" id="IPR017884">
    <property type="entry name" value="SANT_dom"/>
</dbReference>
<dbReference type="InterPro" id="IPR000679">
    <property type="entry name" value="Znf_GATA"/>
</dbReference>
<dbReference type="PANTHER" id="PTHR10865">
    <property type="entry name" value="METASTASIS-ASSOCIATED PROTEIN AND MESODERM INDUCTION EARLY RESPONSE PROTEIN"/>
    <property type="match status" value="1"/>
</dbReference>
<dbReference type="PANTHER" id="PTHR10865:SF4">
    <property type="entry name" value="METASTASIS-ASSOCIATED PROTEIN MTA2"/>
    <property type="match status" value="1"/>
</dbReference>
<dbReference type="Pfam" id="PF01426">
    <property type="entry name" value="BAH"/>
    <property type="match status" value="1"/>
</dbReference>
<dbReference type="Pfam" id="PF01448">
    <property type="entry name" value="ELM2"/>
    <property type="match status" value="1"/>
</dbReference>
<dbReference type="Pfam" id="PF00320">
    <property type="entry name" value="GATA"/>
    <property type="match status" value="1"/>
</dbReference>
<dbReference type="Pfam" id="PF17226">
    <property type="entry name" value="MTA_R1"/>
    <property type="match status" value="1"/>
</dbReference>
<dbReference type="Pfam" id="PF00249">
    <property type="entry name" value="Myb_DNA-binding"/>
    <property type="match status" value="1"/>
</dbReference>
<dbReference type="SMART" id="SM00439">
    <property type="entry name" value="BAH"/>
    <property type="match status" value="1"/>
</dbReference>
<dbReference type="SMART" id="SM01189">
    <property type="entry name" value="ELM2"/>
    <property type="match status" value="1"/>
</dbReference>
<dbReference type="SMART" id="SM00717">
    <property type="entry name" value="SANT"/>
    <property type="match status" value="1"/>
</dbReference>
<dbReference type="SMART" id="SM00401">
    <property type="entry name" value="ZnF_GATA"/>
    <property type="match status" value="1"/>
</dbReference>
<dbReference type="SUPFAM" id="SSF46689">
    <property type="entry name" value="Homeodomain-like"/>
    <property type="match status" value="1"/>
</dbReference>
<dbReference type="PROSITE" id="PS51038">
    <property type="entry name" value="BAH"/>
    <property type="match status" value="1"/>
</dbReference>
<dbReference type="PROSITE" id="PS51156">
    <property type="entry name" value="ELM2"/>
    <property type="match status" value="1"/>
</dbReference>
<dbReference type="PROSITE" id="PS51293">
    <property type="entry name" value="SANT"/>
    <property type="match status" value="1"/>
</dbReference>
<feature type="chain" id="PRO_0000083497" description="Metastasis-associated protein MTA2">
    <location>
        <begin position="1"/>
        <end position="668"/>
    </location>
</feature>
<feature type="domain" description="BAH" evidence="3">
    <location>
        <begin position="1"/>
        <end position="144"/>
    </location>
</feature>
<feature type="domain" description="ELM2" evidence="4">
    <location>
        <begin position="145"/>
        <end position="256"/>
    </location>
</feature>
<feature type="domain" description="SANT" evidence="5">
    <location>
        <begin position="263"/>
        <end position="315"/>
    </location>
</feature>
<feature type="zinc finger region" description="GATA-type; atypical">
    <location>
        <begin position="367"/>
        <end position="394"/>
    </location>
</feature>
<feature type="region of interest" description="Disordered" evidence="6">
    <location>
        <begin position="412"/>
        <end position="437"/>
    </location>
</feature>
<feature type="region of interest" description="Disordered" evidence="6">
    <location>
        <begin position="580"/>
        <end position="599"/>
    </location>
</feature>
<feature type="region of interest" description="Disordered" evidence="6">
    <location>
        <begin position="647"/>
        <end position="668"/>
    </location>
</feature>
<feature type="modified residue" description="Phosphoserine" evidence="2">
    <location>
        <position position="52"/>
    </location>
</feature>
<feature type="modified residue" description="Phosphoserine" evidence="14">
    <location>
        <position position="54"/>
    </location>
</feature>
<feature type="modified residue" description="N6-acetyllysine" evidence="2">
    <location>
        <position position="152"/>
    </location>
</feature>
<feature type="modified residue" description="Phosphoserine" evidence="2">
    <location>
        <position position="433"/>
    </location>
</feature>
<feature type="modified residue" description="Phosphoserine" evidence="14">
    <location>
        <position position="435"/>
    </location>
</feature>
<feature type="modified residue" description="N6-acetyllysine" evidence="15">
    <location>
        <position position="460"/>
    </location>
</feature>
<feature type="modified residue" description="N6-acetyllysine" evidence="15">
    <location>
        <position position="522"/>
    </location>
</feature>
<feature type="modified residue" description="N6-acetyllysine" evidence="15">
    <location>
        <position position="531"/>
    </location>
</feature>
<feature type="modified residue" description="Phosphothreonine" evidence="2">
    <location>
        <position position="534"/>
    </location>
</feature>
<feature type="cross-link" description="Glycyl lysine isopeptide (Lys-Gly) (interchain with G-Cter in SUMO2 and SUMO3); alternate" evidence="1">
    <location>
        <position position="492"/>
    </location>
</feature>
<feature type="cross-link" description="Glycyl lysine isopeptide (Lys-Gly) (interchain with G-Cter in SUMO2); alternate" evidence="2">
    <location>
        <position position="492"/>
    </location>
</feature>
<feature type="cross-link" description="Glycyl lysine isopeptide (Lys-Gly) (interchain with G-Cter in SUMO2)" evidence="2">
    <location>
        <position position="508"/>
    </location>
</feature>
<feature type="cross-link" description="Glycyl lysine isopeptide (Lys-Gly) (interchain with G-Cter in SUMO2)" evidence="2">
    <location>
        <position position="559"/>
    </location>
</feature>
<feature type="cross-link" description="Glycyl lysine isopeptide (Lys-Gly) (interchain with G-Cter in SUMO2)" evidence="2">
    <location>
        <position position="595"/>
    </location>
</feature>
<feature type="sequence conflict" description="In Ref. 4; BAC40180." evidence="13" ref="4">
    <original>N</original>
    <variation>I</variation>
    <location>
        <position position="489"/>
    </location>
</feature>
<name>MTA2_MOUSE</name>
<keyword id="KW-0007">Acetylation</keyword>
<keyword id="KW-0238">DNA-binding</keyword>
<keyword id="KW-1017">Isopeptide bond</keyword>
<keyword id="KW-0479">Metal-binding</keyword>
<keyword id="KW-0539">Nucleus</keyword>
<keyword id="KW-0597">Phosphoprotein</keyword>
<keyword id="KW-1185">Reference proteome</keyword>
<keyword id="KW-0832">Ubl conjugation</keyword>
<keyword id="KW-0862">Zinc</keyword>
<keyword id="KW-0863">Zinc-finger</keyword>
<organism>
    <name type="scientific">Mus musculus</name>
    <name type="common">Mouse</name>
    <dbReference type="NCBI Taxonomy" id="10090"/>
    <lineage>
        <taxon>Eukaryota</taxon>
        <taxon>Metazoa</taxon>
        <taxon>Chordata</taxon>
        <taxon>Craniata</taxon>
        <taxon>Vertebrata</taxon>
        <taxon>Euteleostomi</taxon>
        <taxon>Mammalia</taxon>
        <taxon>Eutheria</taxon>
        <taxon>Euarchontoglires</taxon>
        <taxon>Glires</taxon>
        <taxon>Rodentia</taxon>
        <taxon>Myomorpha</taxon>
        <taxon>Muroidea</taxon>
        <taxon>Muridae</taxon>
        <taxon>Murinae</taxon>
        <taxon>Mus</taxon>
        <taxon>Mus</taxon>
    </lineage>
</organism>
<accession>Q9R190</accession>
<accession>Q3TVT8</accession>
<comment type="function">
    <text evidence="2">May function as a transcriptional coregulator (By similarity). Acts as a component of the histone deacetylase NuRD complex which participates in the remodeling of chromatin (By similarity).</text>
</comment>
<comment type="subunit">
    <text evidence="2 7 8 10 11 12">Component of the nucleosome remodeling and deacetylase (NuRD) repressor complex, composed of core proteins MTA1, MTA2, MTA3, RBBP4, RBBP7, HDAC1, HDAC2, MBD2, MBD3, and peripherally associated proteins CDK2AP1, CDK2AP2, GATAD2A, GATAD2B, CHD3, CHD4 and CHD5 (PubMed:10444591, PubMed:27806305). The exact stoichiometry of the NuRD complex is unknown, and some subunits such as MBD2 and MBD3, GATAD2A and GATAD2B, and CHD3, CHD4 and CHD5 define mutually exclusive NuRD complexes (PubMed:27806305). Interacts with CHD3 (By similarity). Interacts with CHD4 (By similarity). Interacts with GATAD2A (By similarity). Interacts with HDAC7 (PubMed:10984530). Interacts with MBD3 (PubMed:12124384). Interacts with p53/TP53 (By similarity). Interacts with MINT (By similarity). Interacts with PIMREG (By similarity). Interacts with NACC2 (By similarity). Interacts with ERCC6 (By similarity). Interacts with PWWP2B (PubMed:34180153). Interacts with transcription factor BCL11A (By similarity).</text>
</comment>
<comment type="interaction">
    <interactant intactId="EBI-904134">
        <id>Q9R190</id>
    </interactant>
    <interactant intactId="EBI-2312731">
        <id>Q61539</id>
        <label>Esrrb</label>
    </interactant>
    <organismsDiffer>false</organismsDiffer>
    <experiments>3</experiments>
</comment>
<comment type="interaction">
    <interactant intactId="EBI-904134">
        <id>Q9R190</id>
    </interactant>
    <interactant intactId="EBI-301912">
        <id>O09106</id>
        <label>Hdac1</label>
    </interactant>
    <organismsDiffer>false</organismsDiffer>
    <experiments>7</experiments>
</comment>
<comment type="interaction">
    <interactant intactId="EBI-904134">
        <id>Q9R190</id>
    </interactant>
    <interactant intactId="EBI-302251">
        <id>P70288</id>
        <label>Hdac2</label>
    </interactant>
    <organismsDiffer>false</organismsDiffer>
    <experiments>7</experiments>
</comment>
<comment type="interaction">
    <interactant intactId="EBI-904134">
        <id>Q9R190</id>
    </interactant>
    <interactant intactId="EBI-10896863">
        <id>P12813</id>
        <label>Nr4a1</label>
    </interactant>
    <organismsDiffer>false</organismsDiffer>
    <experiments>2</experiments>
</comment>
<comment type="interaction">
    <interactant intactId="EBI-904134">
        <id>Q9R190</id>
    </interactant>
    <interactant intactId="EBI-1606219">
        <id>P20263</id>
        <label>Pou5f1</label>
    </interactant>
    <organismsDiffer>false</organismsDiffer>
    <experiments>6</experiments>
</comment>
<comment type="interaction">
    <interactant intactId="EBI-904134">
        <id>Q9R190</id>
    </interactant>
    <interactant intactId="EBI-2312582">
        <id>Q8BX22</id>
        <label>Sall4</label>
    </interactant>
    <organismsDiffer>false</organismsDiffer>
    <experiments>3</experiments>
</comment>
<comment type="interaction">
    <interactant intactId="EBI-904134">
        <id>Q9R190</id>
    </interactant>
    <interactant intactId="EBI-5737999">
        <id>Q8VI24</id>
        <label>Satb2</label>
    </interactant>
    <organismsDiffer>false</organismsDiffer>
    <experiments>2</experiments>
</comment>
<comment type="subcellular location">
    <subcellularLocation>
        <location evidence="4 5 9">Nucleus</location>
    </subcellularLocation>
</comment>
<comment type="similarity">
    <text evidence="13">Belongs to the metastasis-associated protein family.</text>
</comment>
<sequence>MAANMYRVGDYVYFENSSSNPYLVRRIEELNKTANGNVEAKVVCLFRRRDISSSLNSLADSNAREFEEESKQPGVSEQQRHQLKHRELFLSRQFESLPATHIRGKCSVTLLNETDILNQYLDKEDCFFYSLVFDPVQKTLLADQGEIRVGCKFQAEIPDRLAEGESDNRNQQKMEMKVWDPDNPLTDRQIDQFLVVARAVGTFARALDCSSSIRQPSLHMSAAAASRDITLFHAMDTLQRNGYDLAKAMSTLVPQGGPVLCRDEMEEWSASEAMLFEEALEKYGKDFNDIRQDFLPWKSLASIVQFYYMWKTTDRYIQQKRLKAAEADSKLKQVYIPTYTKPNPNQIISVGSKPGMNGAGFQKGLTCESCHTTQSAQWYAWGPPNMQCRLCASCWIYWKKYGGLKTPTQLEGAARGTTEPHSRGHLSRPEAQSLSPYTTSANRAKLLAKNRQTFLLQTTKLTRLARRMCRDLLQPRRAARRPYAPINANAIKAECSIRLPKAAKTPLKIHPLVRLPLATIVKDLVAQAPLKPKTPRGTKTPINRNQLTQNRGLGGIMVKRSYETMAGAGVPFSANGRPLASGIRSSSQPAAKRQKLNPADAPNPVVFVATKDTRALRKALTHLEMRRAARRPNLPLKVKPTLMTVRPPVPLPASSHPASTNEPIVLED</sequence>
<reference key="1">
    <citation type="journal article" date="1999" name="Genes Dev.">
        <title>Analysis of the NuRD subunits reveals a histone deacetylase core complex and a connection with DNA methylation.</title>
        <authorList>
            <person name="Zhang Y."/>
            <person name="Ng H.-H."/>
            <person name="Erdjument-Bromage H."/>
            <person name="Tempst P."/>
            <person name="Bird A."/>
            <person name="Reinberg D."/>
        </authorList>
    </citation>
    <scope>NUCLEOTIDE SEQUENCE [MRNA]</scope>
    <scope>SUBUNIT</scope>
</reference>
<reference key="2">
    <citation type="journal article" date="2001" name="Gene">
        <title>Sp1 and ETS family transcription factors regulate the mouse Mta2 gene expression.</title>
        <authorList>
            <person name="Xia L."/>
            <person name="Zhang Y."/>
        </authorList>
    </citation>
    <scope>NUCLEOTIDE SEQUENCE [GENOMIC DNA]</scope>
    <source>
        <strain>129/SvJ</strain>
    </source>
</reference>
<reference key="3">
    <citation type="journal article" date="2001" name="DNA Cell Biol.">
        <title>Characterization of mouse metastasis-associated gene 2: genomic structure, nuclear localization signal, and alternative potentials as transcriptional activator and repressor.</title>
        <authorList>
            <person name="Matsusue K."/>
            <person name="Takiguchi S."/>
            <person name="Toh Y."/>
            <person name="Kono A."/>
        </authorList>
    </citation>
    <scope>NUCLEOTIDE SEQUENCE [GENOMIC DNA]</scope>
    <scope>CHARACTERIZATION</scope>
    <scope>SUBCELLULAR LOCATION</scope>
    <source>
        <strain>129/SvJ</strain>
        <tissue>Liver</tissue>
    </source>
</reference>
<reference key="4">
    <citation type="journal article" date="2005" name="Science">
        <title>The transcriptional landscape of the mammalian genome.</title>
        <authorList>
            <person name="Carninci P."/>
            <person name="Kasukawa T."/>
            <person name="Katayama S."/>
            <person name="Gough J."/>
            <person name="Frith M.C."/>
            <person name="Maeda N."/>
            <person name="Oyama R."/>
            <person name="Ravasi T."/>
            <person name="Lenhard B."/>
            <person name="Wells C."/>
            <person name="Kodzius R."/>
            <person name="Shimokawa K."/>
            <person name="Bajic V.B."/>
            <person name="Brenner S.E."/>
            <person name="Batalov S."/>
            <person name="Forrest A.R."/>
            <person name="Zavolan M."/>
            <person name="Davis M.J."/>
            <person name="Wilming L.G."/>
            <person name="Aidinis V."/>
            <person name="Allen J.E."/>
            <person name="Ambesi-Impiombato A."/>
            <person name="Apweiler R."/>
            <person name="Aturaliya R.N."/>
            <person name="Bailey T.L."/>
            <person name="Bansal M."/>
            <person name="Baxter L."/>
            <person name="Beisel K.W."/>
            <person name="Bersano T."/>
            <person name="Bono H."/>
            <person name="Chalk A.M."/>
            <person name="Chiu K.P."/>
            <person name="Choudhary V."/>
            <person name="Christoffels A."/>
            <person name="Clutterbuck D.R."/>
            <person name="Crowe M.L."/>
            <person name="Dalla E."/>
            <person name="Dalrymple B.P."/>
            <person name="de Bono B."/>
            <person name="Della Gatta G."/>
            <person name="di Bernardo D."/>
            <person name="Down T."/>
            <person name="Engstrom P."/>
            <person name="Fagiolini M."/>
            <person name="Faulkner G."/>
            <person name="Fletcher C.F."/>
            <person name="Fukushima T."/>
            <person name="Furuno M."/>
            <person name="Futaki S."/>
            <person name="Gariboldi M."/>
            <person name="Georgii-Hemming P."/>
            <person name="Gingeras T.R."/>
            <person name="Gojobori T."/>
            <person name="Green R.E."/>
            <person name="Gustincich S."/>
            <person name="Harbers M."/>
            <person name="Hayashi Y."/>
            <person name="Hensch T.K."/>
            <person name="Hirokawa N."/>
            <person name="Hill D."/>
            <person name="Huminiecki L."/>
            <person name="Iacono M."/>
            <person name="Ikeo K."/>
            <person name="Iwama A."/>
            <person name="Ishikawa T."/>
            <person name="Jakt M."/>
            <person name="Kanapin A."/>
            <person name="Katoh M."/>
            <person name="Kawasawa Y."/>
            <person name="Kelso J."/>
            <person name="Kitamura H."/>
            <person name="Kitano H."/>
            <person name="Kollias G."/>
            <person name="Krishnan S.P."/>
            <person name="Kruger A."/>
            <person name="Kummerfeld S.K."/>
            <person name="Kurochkin I.V."/>
            <person name="Lareau L.F."/>
            <person name="Lazarevic D."/>
            <person name="Lipovich L."/>
            <person name="Liu J."/>
            <person name="Liuni S."/>
            <person name="McWilliam S."/>
            <person name="Madan Babu M."/>
            <person name="Madera M."/>
            <person name="Marchionni L."/>
            <person name="Matsuda H."/>
            <person name="Matsuzawa S."/>
            <person name="Miki H."/>
            <person name="Mignone F."/>
            <person name="Miyake S."/>
            <person name="Morris K."/>
            <person name="Mottagui-Tabar S."/>
            <person name="Mulder N."/>
            <person name="Nakano N."/>
            <person name="Nakauchi H."/>
            <person name="Ng P."/>
            <person name="Nilsson R."/>
            <person name="Nishiguchi S."/>
            <person name="Nishikawa S."/>
            <person name="Nori F."/>
            <person name="Ohara O."/>
            <person name="Okazaki Y."/>
            <person name="Orlando V."/>
            <person name="Pang K.C."/>
            <person name="Pavan W.J."/>
            <person name="Pavesi G."/>
            <person name="Pesole G."/>
            <person name="Petrovsky N."/>
            <person name="Piazza S."/>
            <person name="Reed J."/>
            <person name="Reid J.F."/>
            <person name="Ring B.Z."/>
            <person name="Ringwald M."/>
            <person name="Rost B."/>
            <person name="Ruan Y."/>
            <person name="Salzberg S.L."/>
            <person name="Sandelin A."/>
            <person name="Schneider C."/>
            <person name="Schoenbach C."/>
            <person name="Sekiguchi K."/>
            <person name="Semple C.A."/>
            <person name="Seno S."/>
            <person name="Sessa L."/>
            <person name="Sheng Y."/>
            <person name="Shibata Y."/>
            <person name="Shimada H."/>
            <person name="Shimada K."/>
            <person name="Silva D."/>
            <person name="Sinclair B."/>
            <person name="Sperling S."/>
            <person name="Stupka E."/>
            <person name="Sugiura K."/>
            <person name="Sultana R."/>
            <person name="Takenaka Y."/>
            <person name="Taki K."/>
            <person name="Tammoja K."/>
            <person name="Tan S.L."/>
            <person name="Tang S."/>
            <person name="Taylor M.S."/>
            <person name="Tegner J."/>
            <person name="Teichmann S.A."/>
            <person name="Ueda H.R."/>
            <person name="van Nimwegen E."/>
            <person name="Verardo R."/>
            <person name="Wei C.L."/>
            <person name="Yagi K."/>
            <person name="Yamanishi H."/>
            <person name="Zabarovsky E."/>
            <person name="Zhu S."/>
            <person name="Zimmer A."/>
            <person name="Hide W."/>
            <person name="Bult C."/>
            <person name="Grimmond S.M."/>
            <person name="Teasdale R.D."/>
            <person name="Liu E.T."/>
            <person name="Brusic V."/>
            <person name="Quackenbush J."/>
            <person name="Wahlestedt C."/>
            <person name="Mattick J.S."/>
            <person name="Hume D.A."/>
            <person name="Kai C."/>
            <person name="Sasaki D."/>
            <person name="Tomaru Y."/>
            <person name="Fukuda S."/>
            <person name="Kanamori-Katayama M."/>
            <person name="Suzuki M."/>
            <person name="Aoki J."/>
            <person name="Arakawa T."/>
            <person name="Iida J."/>
            <person name="Imamura K."/>
            <person name="Itoh M."/>
            <person name="Kato T."/>
            <person name="Kawaji H."/>
            <person name="Kawagashira N."/>
            <person name="Kawashima T."/>
            <person name="Kojima M."/>
            <person name="Kondo S."/>
            <person name="Konno H."/>
            <person name="Nakano K."/>
            <person name="Ninomiya N."/>
            <person name="Nishio T."/>
            <person name="Okada M."/>
            <person name="Plessy C."/>
            <person name="Shibata K."/>
            <person name="Shiraki T."/>
            <person name="Suzuki S."/>
            <person name="Tagami M."/>
            <person name="Waki K."/>
            <person name="Watahiki A."/>
            <person name="Okamura-Oho Y."/>
            <person name="Suzuki H."/>
            <person name="Kawai J."/>
            <person name="Hayashizaki Y."/>
        </authorList>
    </citation>
    <scope>NUCLEOTIDE SEQUENCE [LARGE SCALE MRNA]</scope>
    <source>
        <strain>C57BL/6J</strain>
        <strain>NOD</strain>
        <tissue>Amnion</tissue>
        <tissue>Thymus</tissue>
    </source>
</reference>
<reference key="5">
    <citation type="journal article" date="2004" name="Genome Res.">
        <title>The status, quality, and expansion of the NIH full-length cDNA project: the Mammalian Gene Collection (MGC).</title>
        <authorList>
            <consortium name="The MGC Project Team"/>
        </authorList>
    </citation>
    <scope>NUCLEOTIDE SEQUENCE [LARGE SCALE MRNA]</scope>
    <source>
        <strain>C57BL/6J</strain>
        <tissue>Brain</tissue>
    </source>
</reference>
<reference key="6">
    <citation type="journal article" date="2000" name="Proc. Natl. Acad. Sci. U.S.A.">
        <title>Identification of a nuclear domain with deacetylase activity.</title>
        <authorList>
            <person name="Downes M."/>
            <person name="Ordentlich P."/>
            <person name="Kao H.-Y."/>
            <person name="Alvarez J.G.A."/>
            <person name="Evans R.M."/>
        </authorList>
    </citation>
    <scope>INTERACTION WITH HDAC7</scope>
</reference>
<reference key="7">
    <citation type="journal article" date="2002" name="J. Biol. Chem.">
        <title>The mCpG-binding domain of human MBD3 does not bind to mCpG but interacts with NuRD/Mi2 components HDAC1 and MTA2.</title>
        <authorList>
            <person name="Saito M."/>
            <person name="Ishikawa F."/>
        </authorList>
    </citation>
    <scope>INTERACTION WITH MBD3</scope>
</reference>
<reference key="8">
    <citation type="journal article" date="2010" name="Cell">
        <title>A tissue-specific atlas of mouse protein phosphorylation and expression.</title>
        <authorList>
            <person name="Huttlin E.L."/>
            <person name="Jedrychowski M.P."/>
            <person name="Elias J.E."/>
            <person name="Goswami T."/>
            <person name="Rad R."/>
            <person name="Beausoleil S.A."/>
            <person name="Villen J."/>
            <person name="Haas W."/>
            <person name="Sowa M.E."/>
            <person name="Gygi S.P."/>
        </authorList>
    </citation>
    <scope>PHOSPHORYLATION [LARGE SCALE ANALYSIS] AT SER-54 AND SER-435</scope>
    <scope>IDENTIFICATION BY MASS SPECTROMETRY [LARGE SCALE ANALYSIS]</scope>
    <source>
        <tissue>Brain</tissue>
        <tissue>Brown adipose tissue</tissue>
        <tissue>Kidney</tissue>
        <tissue>Lung</tissue>
        <tissue>Pancreas</tissue>
        <tissue>Spleen</tissue>
        <tissue>Testis</tissue>
    </source>
</reference>
<reference key="9">
    <citation type="journal article" date="2013" name="Mol. Cell">
        <title>SIRT5-mediated lysine desuccinylation impacts diverse metabolic pathways.</title>
        <authorList>
            <person name="Park J."/>
            <person name="Chen Y."/>
            <person name="Tishkoff D.X."/>
            <person name="Peng C."/>
            <person name="Tan M."/>
            <person name="Dai L."/>
            <person name="Xie Z."/>
            <person name="Zhang Y."/>
            <person name="Zwaans B.M."/>
            <person name="Skinner M.E."/>
            <person name="Lombard D.B."/>
            <person name="Zhao Y."/>
        </authorList>
    </citation>
    <scope>ACETYLATION [LARGE SCALE ANALYSIS] AT LYS-460; LYS-522 AND LYS-531</scope>
    <scope>IDENTIFICATION BY MASS SPECTROMETRY [LARGE SCALE ANALYSIS]</scope>
    <source>
        <tissue>Embryonic fibroblast</tissue>
    </source>
</reference>
<reference key="10">
    <citation type="journal article" date="2016" name="Cell Rep.">
        <title>A Functional Switch of NuRD Chromatin Remodeling Complex Subunits Regulates Mouse Cortical Development.</title>
        <authorList>
            <person name="Nitarska J."/>
            <person name="Smith J.G."/>
            <person name="Sherlock W.T."/>
            <person name="Hillege M.M."/>
            <person name="Nott A."/>
            <person name="Barshop W.D."/>
            <person name="Vashisht A.A."/>
            <person name="Wohlschlegel J.A."/>
            <person name="Mitter R."/>
            <person name="Riccio A."/>
        </authorList>
    </citation>
    <scope>IDENTIFICATION IN THE NURD COMPLEX</scope>
    <scope>IDENTIFICATION BY MASS SPECTROMETRY</scope>
</reference>
<reference key="11">
    <citation type="journal article" date="2021" name="Adv. Sci.">
        <title>PWWP2B Fine-Tunes Adipose Thermogenesis by Stabilizing HDACs in a NuRD Subcomplex.</title>
        <authorList>
            <person name="Yan L."/>
            <person name="Jin W."/>
            <person name="Zhao Q."/>
            <person name="Cui X."/>
            <person name="Shi T."/>
            <person name="Xu Y."/>
            <person name="Li F."/>
            <person name="Jin W."/>
            <person name="Zhang Z."/>
            <person name="Zhang Z."/>
            <person name="Tang Q.Q."/>
            <person name="Pan D."/>
        </authorList>
    </citation>
    <scope>INTERACTION WITH PWWP2B</scope>
</reference>
<evidence type="ECO:0000250" key="1"/>
<evidence type="ECO:0000250" key="2">
    <source>
        <dbReference type="UniProtKB" id="O94776"/>
    </source>
</evidence>
<evidence type="ECO:0000255" key="3">
    <source>
        <dbReference type="PROSITE-ProRule" id="PRU00370"/>
    </source>
</evidence>
<evidence type="ECO:0000255" key="4">
    <source>
        <dbReference type="PROSITE-ProRule" id="PRU00512"/>
    </source>
</evidence>
<evidence type="ECO:0000255" key="5">
    <source>
        <dbReference type="PROSITE-ProRule" id="PRU00624"/>
    </source>
</evidence>
<evidence type="ECO:0000256" key="6">
    <source>
        <dbReference type="SAM" id="MobiDB-lite"/>
    </source>
</evidence>
<evidence type="ECO:0000269" key="7">
    <source>
    </source>
</evidence>
<evidence type="ECO:0000269" key="8">
    <source>
    </source>
</evidence>
<evidence type="ECO:0000269" key="9">
    <source>
    </source>
</evidence>
<evidence type="ECO:0000269" key="10">
    <source>
    </source>
</evidence>
<evidence type="ECO:0000269" key="11">
    <source>
    </source>
</evidence>
<evidence type="ECO:0000269" key="12">
    <source>
    </source>
</evidence>
<evidence type="ECO:0000305" key="13"/>
<evidence type="ECO:0007744" key="14">
    <source>
    </source>
</evidence>
<evidence type="ECO:0007744" key="15">
    <source>
    </source>
</evidence>